<sequence length="1343" mass="150020">MVYSYSEKKRIRKDFGKRPKVLDIPYLLSIQLDSFKKFTDQDPTGERGLEAAFRSVFPIKSFSGNSELQYVSYKLGEPVFDVKECQIRGVTYSAPLRVKLRMVLYDREAAAGTVKDIKEQEVYMGDIPLMTDNGTFVINGTERVIVSQLHRSPGVFFDHDRGKTHSSGKVLYNARIIPYRGSWLDFEFDPKDALFVRIDRRRKLPATIMLRALEYSTQEILDLFFERVEFKIKKDTLVMALVPERLRGETASYDIKDAEGSVLVEAGRRITARHIRQLEKTNTTELEVPVEYIVGKYAAQDYIDPDTGEVLVSANSEISLEDLAKLSLAGIKELSTLYINELDHGAYISDTLRIDSTTNRLEALVEIYRMMRPGEPPTKDAAEALFQNLFFSEERYDLSKVGRMKFNRRLSIPDDEGSGVLSKEDIVAVMKNIIHIRNGFDEVDDIDHLGNRRIRSVGEMAENQFRVGLVRVERAVRERLSLGDLNELMPQDLINAKPISAAVKEFFGSSQLSQFMDQNNPLSEVTHKRRISALGPGGLTRERAGFEVRDVHPTHYGRLCPIETPEGPNIGLINSLASFARTNSYGFLETPYRKVIDGVITDEVEYLSAIEEGRYVIAQANIEIDANGRMAEEQIACRHKGESTFMRAADIQYMDVSPQQIISVAASLIPFLEHDDANRALMGANMQRQAVPTLRSEKPLVGTGIERTLAVDSGVVVVAKRGGFVDYVDASRIVVKVNEDELRPGEAGIDIYNLTKYTRSNQNTCINQRPCCSVGEPVVRGDVLADGPSTDLGDLALGQNMRIAFMPWNGYNFEDSILISERVAQEDRFTTIHIQELSCIARDTKLGSEEITADIPNVGESALSKLDESGIVYIGAEVKGGDILVGKVTPKGETQLTPEEKLLRAIFGEKASDVKDSSLRVPNSVKGTIIDVQVFTRDGVEKDKRAVEIEEMHIAQARKDLGEEFKILEEGVLSRARNLLIGAGFSDAQIAALPRKDVLIQVIDDETKQTELEQLAEQHEELKADFDKKFEIKRRKITQGDDLAPGVLKIVKVYLAVKRTIQPGDKMAGRHGNKGVISKICPIEDMPYDEQGNPVDIVLNPLGVPSRMNIGQVLEVHMGAAAKGIGNKITAMLEEQRELAEVRGYIKQVYELGDEVQQRVDIDSFTDDEVLRLATNLKGGIPIATPAFDGAKEKEIKQMLELAGLPTSGQLKLFDGRTGNEFERQVTVGYMYMLKLNHLVDDKMHARSTGSYSLVTQQPLGGKAQFGGQRFGEMEVWALEAYGAAYTLQEMLTVKSDDVNGRTQMYKNIVDGNHQMQPGMPESFNVLLKEIRSLGINIELDQA</sequence>
<accession>B8EBL2</accession>
<comment type="function">
    <text evidence="1">DNA-dependent RNA polymerase catalyzes the transcription of DNA into RNA using the four ribonucleoside triphosphates as substrates.</text>
</comment>
<comment type="catalytic activity">
    <reaction evidence="1">
        <text>RNA(n) + a ribonucleoside 5'-triphosphate = RNA(n+1) + diphosphate</text>
        <dbReference type="Rhea" id="RHEA:21248"/>
        <dbReference type="Rhea" id="RHEA-COMP:14527"/>
        <dbReference type="Rhea" id="RHEA-COMP:17342"/>
        <dbReference type="ChEBI" id="CHEBI:33019"/>
        <dbReference type="ChEBI" id="CHEBI:61557"/>
        <dbReference type="ChEBI" id="CHEBI:140395"/>
        <dbReference type="EC" id="2.7.7.6"/>
    </reaction>
</comment>
<comment type="subunit">
    <text evidence="1">The RNAP catalytic core consists of 2 alpha, 1 beta, 1 beta' and 1 omega subunit. When a sigma factor is associated with the core the holoenzyme is formed, which can initiate transcription.</text>
</comment>
<comment type="similarity">
    <text evidence="1">Belongs to the RNA polymerase beta chain family.</text>
</comment>
<gene>
    <name evidence="1" type="primary">rpoB</name>
    <name type="ordered locus">Sbal223_4063</name>
</gene>
<name>RPOB_SHEB2</name>
<protein>
    <recommendedName>
        <fullName evidence="1">DNA-directed RNA polymerase subunit beta</fullName>
        <shortName evidence="1">RNAP subunit beta</shortName>
        <ecNumber evidence="1">2.7.7.6</ecNumber>
    </recommendedName>
    <alternativeName>
        <fullName evidence="1">RNA polymerase subunit beta</fullName>
    </alternativeName>
    <alternativeName>
        <fullName evidence="1">Transcriptase subunit beta</fullName>
    </alternativeName>
</protein>
<evidence type="ECO:0000255" key="1">
    <source>
        <dbReference type="HAMAP-Rule" id="MF_01321"/>
    </source>
</evidence>
<proteinExistence type="inferred from homology"/>
<organism>
    <name type="scientific">Shewanella baltica (strain OS223)</name>
    <dbReference type="NCBI Taxonomy" id="407976"/>
    <lineage>
        <taxon>Bacteria</taxon>
        <taxon>Pseudomonadati</taxon>
        <taxon>Pseudomonadota</taxon>
        <taxon>Gammaproteobacteria</taxon>
        <taxon>Alteromonadales</taxon>
        <taxon>Shewanellaceae</taxon>
        <taxon>Shewanella</taxon>
    </lineage>
</organism>
<dbReference type="EC" id="2.7.7.6" evidence="1"/>
<dbReference type="EMBL" id="CP001252">
    <property type="protein sequence ID" value="ACK48536.1"/>
    <property type="molecule type" value="Genomic_DNA"/>
</dbReference>
<dbReference type="RefSeq" id="WP_012588808.1">
    <property type="nucleotide sequence ID" value="NC_011663.1"/>
</dbReference>
<dbReference type="SMR" id="B8EBL2"/>
<dbReference type="KEGG" id="sbp:Sbal223_4063"/>
<dbReference type="HOGENOM" id="CLU_000524_4_0_6"/>
<dbReference type="Proteomes" id="UP000002507">
    <property type="component" value="Chromosome"/>
</dbReference>
<dbReference type="GO" id="GO:0000428">
    <property type="term" value="C:DNA-directed RNA polymerase complex"/>
    <property type="evidence" value="ECO:0007669"/>
    <property type="project" value="UniProtKB-KW"/>
</dbReference>
<dbReference type="GO" id="GO:0003677">
    <property type="term" value="F:DNA binding"/>
    <property type="evidence" value="ECO:0007669"/>
    <property type="project" value="UniProtKB-UniRule"/>
</dbReference>
<dbReference type="GO" id="GO:0003899">
    <property type="term" value="F:DNA-directed RNA polymerase activity"/>
    <property type="evidence" value="ECO:0007669"/>
    <property type="project" value="UniProtKB-UniRule"/>
</dbReference>
<dbReference type="GO" id="GO:0032549">
    <property type="term" value="F:ribonucleoside binding"/>
    <property type="evidence" value="ECO:0007669"/>
    <property type="project" value="InterPro"/>
</dbReference>
<dbReference type="GO" id="GO:0006351">
    <property type="term" value="P:DNA-templated transcription"/>
    <property type="evidence" value="ECO:0007669"/>
    <property type="project" value="UniProtKB-UniRule"/>
</dbReference>
<dbReference type="CDD" id="cd00653">
    <property type="entry name" value="RNA_pol_B_RPB2"/>
    <property type="match status" value="1"/>
</dbReference>
<dbReference type="FunFam" id="2.40.270.10:FF:000003">
    <property type="entry name" value="DNA-directed RNA polymerase subunit beta"/>
    <property type="match status" value="1"/>
</dbReference>
<dbReference type="FunFam" id="2.40.270.10:FF:000004">
    <property type="entry name" value="DNA-directed RNA polymerase subunit beta"/>
    <property type="match status" value="1"/>
</dbReference>
<dbReference type="FunFam" id="2.40.50.100:FF:000006">
    <property type="entry name" value="DNA-directed RNA polymerase subunit beta"/>
    <property type="match status" value="1"/>
</dbReference>
<dbReference type="FunFam" id="2.40.50.150:FF:000001">
    <property type="entry name" value="DNA-directed RNA polymerase subunit beta"/>
    <property type="match status" value="1"/>
</dbReference>
<dbReference type="FunFam" id="3.90.1100.10:FF:000002">
    <property type="entry name" value="DNA-directed RNA polymerase subunit beta"/>
    <property type="match status" value="1"/>
</dbReference>
<dbReference type="FunFam" id="3.90.1110.10:FF:000001">
    <property type="entry name" value="DNA-directed RNA polymerase subunit beta"/>
    <property type="match status" value="1"/>
</dbReference>
<dbReference type="FunFam" id="3.90.1110.10:FF:000004">
    <property type="entry name" value="DNA-directed RNA polymerase subunit beta"/>
    <property type="match status" value="1"/>
</dbReference>
<dbReference type="FunFam" id="3.90.1800.10:FF:000001">
    <property type="entry name" value="DNA-directed RNA polymerase subunit beta"/>
    <property type="match status" value="1"/>
</dbReference>
<dbReference type="Gene3D" id="2.40.50.100">
    <property type="match status" value="1"/>
</dbReference>
<dbReference type="Gene3D" id="2.40.50.150">
    <property type="match status" value="1"/>
</dbReference>
<dbReference type="Gene3D" id="3.90.1100.10">
    <property type="match status" value="3"/>
</dbReference>
<dbReference type="Gene3D" id="2.40.270.10">
    <property type="entry name" value="DNA-directed RNA polymerase, subunit 2, domain 6"/>
    <property type="match status" value="1"/>
</dbReference>
<dbReference type="Gene3D" id="3.90.1800.10">
    <property type="entry name" value="RNA polymerase alpha subunit dimerisation domain"/>
    <property type="match status" value="1"/>
</dbReference>
<dbReference type="Gene3D" id="3.90.1110.10">
    <property type="entry name" value="RNA polymerase Rpb2, domain 2"/>
    <property type="match status" value="1"/>
</dbReference>
<dbReference type="HAMAP" id="MF_01321">
    <property type="entry name" value="RNApol_bact_RpoB"/>
    <property type="match status" value="1"/>
</dbReference>
<dbReference type="InterPro" id="IPR019462">
    <property type="entry name" value="DNA-dir_RNA_pol_bsu_external_1"/>
</dbReference>
<dbReference type="InterPro" id="IPR015712">
    <property type="entry name" value="DNA-dir_RNA_pol_su2"/>
</dbReference>
<dbReference type="InterPro" id="IPR007120">
    <property type="entry name" value="DNA-dir_RNAP_su2_dom"/>
</dbReference>
<dbReference type="InterPro" id="IPR037033">
    <property type="entry name" value="DNA-dir_RNAP_su2_hyb_sf"/>
</dbReference>
<dbReference type="InterPro" id="IPR010243">
    <property type="entry name" value="RNA_pol_bsu_bac"/>
</dbReference>
<dbReference type="InterPro" id="IPR007121">
    <property type="entry name" value="RNA_pol_bsu_CS"/>
</dbReference>
<dbReference type="InterPro" id="IPR007644">
    <property type="entry name" value="RNA_pol_bsu_protrusion"/>
</dbReference>
<dbReference type="InterPro" id="IPR007642">
    <property type="entry name" value="RNA_pol_Rpb2_2"/>
</dbReference>
<dbReference type="InterPro" id="IPR037034">
    <property type="entry name" value="RNA_pol_Rpb2_2_sf"/>
</dbReference>
<dbReference type="InterPro" id="IPR007645">
    <property type="entry name" value="RNA_pol_Rpb2_3"/>
</dbReference>
<dbReference type="InterPro" id="IPR007641">
    <property type="entry name" value="RNA_pol_Rpb2_7"/>
</dbReference>
<dbReference type="InterPro" id="IPR014724">
    <property type="entry name" value="RNA_pol_RPB2_OB-fold"/>
</dbReference>
<dbReference type="NCBIfam" id="NF001616">
    <property type="entry name" value="PRK00405.1"/>
    <property type="match status" value="1"/>
</dbReference>
<dbReference type="NCBIfam" id="TIGR02013">
    <property type="entry name" value="rpoB"/>
    <property type="match status" value="1"/>
</dbReference>
<dbReference type="PANTHER" id="PTHR20856">
    <property type="entry name" value="DNA-DIRECTED RNA POLYMERASE I SUBUNIT 2"/>
    <property type="match status" value="1"/>
</dbReference>
<dbReference type="Pfam" id="PF04563">
    <property type="entry name" value="RNA_pol_Rpb2_1"/>
    <property type="match status" value="1"/>
</dbReference>
<dbReference type="Pfam" id="PF04561">
    <property type="entry name" value="RNA_pol_Rpb2_2"/>
    <property type="match status" value="2"/>
</dbReference>
<dbReference type="Pfam" id="PF04565">
    <property type="entry name" value="RNA_pol_Rpb2_3"/>
    <property type="match status" value="1"/>
</dbReference>
<dbReference type="Pfam" id="PF10385">
    <property type="entry name" value="RNA_pol_Rpb2_45"/>
    <property type="match status" value="1"/>
</dbReference>
<dbReference type="Pfam" id="PF00562">
    <property type="entry name" value="RNA_pol_Rpb2_6"/>
    <property type="match status" value="1"/>
</dbReference>
<dbReference type="Pfam" id="PF04560">
    <property type="entry name" value="RNA_pol_Rpb2_7"/>
    <property type="match status" value="1"/>
</dbReference>
<dbReference type="SUPFAM" id="SSF64484">
    <property type="entry name" value="beta and beta-prime subunits of DNA dependent RNA-polymerase"/>
    <property type="match status" value="1"/>
</dbReference>
<dbReference type="PROSITE" id="PS01166">
    <property type="entry name" value="RNA_POL_BETA"/>
    <property type="match status" value="1"/>
</dbReference>
<feature type="chain" id="PRO_1000165820" description="DNA-directed RNA polymerase subunit beta">
    <location>
        <begin position="1"/>
        <end position="1343"/>
    </location>
</feature>
<reference key="1">
    <citation type="submission" date="2008-12" db="EMBL/GenBank/DDBJ databases">
        <title>Complete sequence of chromosome of Shewanella baltica OS223.</title>
        <authorList>
            <consortium name="US DOE Joint Genome Institute"/>
            <person name="Lucas S."/>
            <person name="Copeland A."/>
            <person name="Lapidus A."/>
            <person name="Glavina del Rio T."/>
            <person name="Dalin E."/>
            <person name="Tice H."/>
            <person name="Bruce D."/>
            <person name="Goodwin L."/>
            <person name="Pitluck S."/>
            <person name="Chertkov O."/>
            <person name="Meincke L."/>
            <person name="Brettin T."/>
            <person name="Detter J.C."/>
            <person name="Han C."/>
            <person name="Kuske C.R."/>
            <person name="Larimer F."/>
            <person name="Land M."/>
            <person name="Hauser L."/>
            <person name="Kyrpides N."/>
            <person name="Ovchinnikova G."/>
            <person name="Brettar I."/>
            <person name="Rodrigues J."/>
            <person name="Konstantinidis K."/>
            <person name="Tiedje J."/>
        </authorList>
    </citation>
    <scope>NUCLEOTIDE SEQUENCE [LARGE SCALE GENOMIC DNA]</scope>
    <source>
        <strain>OS223</strain>
    </source>
</reference>
<keyword id="KW-0240">DNA-directed RNA polymerase</keyword>
<keyword id="KW-0548">Nucleotidyltransferase</keyword>
<keyword id="KW-0804">Transcription</keyword>
<keyword id="KW-0808">Transferase</keyword>